<dbReference type="EC" id="2.3.2.27" evidence="1"/>
<dbReference type="EMBL" id="AF447589">
    <property type="protein sequence ID" value="AAM22872.1"/>
    <property type="molecule type" value="mRNA"/>
</dbReference>
<dbReference type="EMBL" id="AK098524">
    <property type="protein sequence ID" value="BAC05321.1"/>
    <property type="molecule type" value="mRNA"/>
</dbReference>
<dbReference type="EMBL" id="AC006463">
    <property type="protein sequence ID" value="AAQ96858.1"/>
    <property type="molecule type" value="Genomic_DNA"/>
</dbReference>
<dbReference type="EMBL" id="CH236947">
    <property type="protein sequence ID" value="EAL24341.1"/>
    <property type="molecule type" value="Genomic_DNA"/>
</dbReference>
<dbReference type="EMBL" id="CH471070">
    <property type="protein sequence ID" value="EAW83577.1"/>
    <property type="molecule type" value="Genomic_DNA"/>
</dbReference>
<dbReference type="EMBL" id="BC022038">
    <property type="protein sequence ID" value="AAH22038.1"/>
    <property type="molecule type" value="mRNA"/>
</dbReference>
<dbReference type="CCDS" id="CCDS5784.1"/>
<dbReference type="RefSeq" id="NP_631914.1">
    <property type="nucleotide sequence ID" value="NM_139175.2"/>
</dbReference>
<dbReference type="SMR" id="Q8WVZ7"/>
<dbReference type="BioGRID" id="127962">
    <property type="interactions" value="28"/>
</dbReference>
<dbReference type="FunCoup" id="Q8WVZ7">
    <property type="interactions" value="3"/>
</dbReference>
<dbReference type="IntAct" id="Q8WVZ7">
    <property type="interactions" value="22"/>
</dbReference>
<dbReference type="STRING" id="9606.ENSP00000344489"/>
<dbReference type="GlyGen" id="Q8WVZ7">
    <property type="glycosylation" value="2 sites, 1 O-linked glycan (2 sites)"/>
</dbReference>
<dbReference type="iPTMnet" id="Q8WVZ7"/>
<dbReference type="PhosphoSitePlus" id="Q8WVZ7"/>
<dbReference type="BioMuta" id="RNF133"/>
<dbReference type="DMDM" id="74730905"/>
<dbReference type="MassIVE" id="Q8WVZ7"/>
<dbReference type="PaxDb" id="9606-ENSP00000344489"/>
<dbReference type="PeptideAtlas" id="Q8WVZ7"/>
<dbReference type="ProteomicsDB" id="74838"/>
<dbReference type="Antibodypedia" id="2716">
    <property type="antibodies" value="192 antibodies from 22 providers"/>
</dbReference>
<dbReference type="DNASU" id="168433"/>
<dbReference type="Ensembl" id="ENST00000340112.3">
    <property type="protein sequence ID" value="ENSP00000344489.2"/>
    <property type="gene ID" value="ENSG00000188050.3"/>
</dbReference>
<dbReference type="GeneID" id="168433"/>
<dbReference type="KEGG" id="hsa:168433"/>
<dbReference type="MANE-Select" id="ENST00000340112.3">
    <property type="protein sequence ID" value="ENSP00000344489.2"/>
    <property type="RefSeq nucleotide sequence ID" value="NM_139175.2"/>
    <property type="RefSeq protein sequence ID" value="NP_631914.1"/>
</dbReference>
<dbReference type="UCSC" id="uc003vkj.2">
    <property type="organism name" value="human"/>
</dbReference>
<dbReference type="AGR" id="HGNC:21154"/>
<dbReference type="CTD" id="168433"/>
<dbReference type="GeneCards" id="RNF133"/>
<dbReference type="HGNC" id="HGNC:21154">
    <property type="gene designation" value="RNF133"/>
</dbReference>
<dbReference type="HPA" id="ENSG00000188050">
    <property type="expression patterns" value="Tissue enriched (testis)"/>
</dbReference>
<dbReference type="MIM" id="620556">
    <property type="type" value="gene"/>
</dbReference>
<dbReference type="neXtProt" id="NX_Q8WVZ7"/>
<dbReference type="OpenTargets" id="ENSG00000188050"/>
<dbReference type="PharmGKB" id="PA134991267"/>
<dbReference type="VEuPathDB" id="HostDB:ENSG00000188050"/>
<dbReference type="eggNOG" id="KOG4628">
    <property type="taxonomic scope" value="Eukaryota"/>
</dbReference>
<dbReference type="GeneTree" id="ENSGT00940000163928"/>
<dbReference type="HOGENOM" id="CLU_049885_1_2_1"/>
<dbReference type="InParanoid" id="Q8WVZ7"/>
<dbReference type="OMA" id="YFIFYHI"/>
<dbReference type="OrthoDB" id="5357315at2759"/>
<dbReference type="PAN-GO" id="Q8WVZ7">
    <property type="GO annotations" value="7 GO annotations based on evolutionary models"/>
</dbReference>
<dbReference type="PhylomeDB" id="Q8WVZ7"/>
<dbReference type="TreeFam" id="TF317486"/>
<dbReference type="PathwayCommons" id="Q8WVZ7"/>
<dbReference type="SignaLink" id="Q8WVZ7"/>
<dbReference type="SIGNOR" id="Q8WVZ7"/>
<dbReference type="UniPathway" id="UPA00143"/>
<dbReference type="BioGRID-ORCS" id="168433">
    <property type="hits" value="8 hits in 1184 CRISPR screens"/>
</dbReference>
<dbReference type="GenomeRNAi" id="168433"/>
<dbReference type="Pharos" id="Q8WVZ7">
    <property type="development level" value="Tdark"/>
</dbReference>
<dbReference type="PRO" id="PR:Q8WVZ7"/>
<dbReference type="Proteomes" id="UP000005640">
    <property type="component" value="Chromosome 7"/>
</dbReference>
<dbReference type="RNAct" id="Q8WVZ7">
    <property type="molecule type" value="protein"/>
</dbReference>
<dbReference type="Bgee" id="ENSG00000188050">
    <property type="expression patterns" value="Expressed in sperm and 83 other cell types or tissues"/>
</dbReference>
<dbReference type="GO" id="GO:0005737">
    <property type="term" value="C:cytoplasm"/>
    <property type="evidence" value="ECO:0000318"/>
    <property type="project" value="GO_Central"/>
</dbReference>
<dbReference type="GO" id="GO:0005783">
    <property type="term" value="C:endoplasmic reticulum"/>
    <property type="evidence" value="ECO:0000318"/>
    <property type="project" value="GO_Central"/>
</dbReference>
<dbReference type="GO" id="GO:0005789">
    <property type="term" value="C:endoplasmic reticulum membrane"/>
    <property type="evidence" value="ECO:0000318"/>
    <property type="project" value="GO_Central"/>
</dbReference>
<dbReference type="GO" id="GO:0005794">
    <property type="term" value="C:Golgi apparatus"/>
    <property type="evidence" value="ECO:0000318"/>
    <property type="project" value="GO_Central"/>
</dbReference>
<dbReference type="GO" id="GO:0005770">
    <property type="term" value="C:late endosome"/>
    <property type="evidence" value="ECO:0000318"/>
    <property type="project" value="GO_Central"/>
</dbReference>
<dbReference type="GO" id="GO:0061630">
    <property type="term" value="F:ubiquitin protein ligase activity"/>
    <property type="evidence" value="ECO:0000318"/>
    <property type="project" value="GO_Central"/>
</dbReference>
<dbReference type="GO" id="GO:0008270">
    <property type="term" value="F:zinc ion binding"/>
    <property type="evidence" value="ECO:0007669"/>
    <property type="project" value="UniProtKB-KW"/>
</dbReference>
<dbReference type="GO" id="GO:0051865">
    <property type="term" value="P:protein autoubiquitination"/>
    <property type="evidence" value="ECO:0007669"/>
    <property type="project" value="Ensembl"/>
</dbReference>
<dbReference type="GO" id="GO:0006511">
    <property type="term" value="P:ubiquitin-dependent protein catabolic process"/>
    <property type="evidence" value="ECO:0000318"/>
    <property type="project" value="GO_Central"/>
</dbReference>
<dbReference type="CDD" id="cd02122">
    <property type="entry name" value="PA_GRAIL_like"/>
    <property type="match status" value="1"/>
</dbReference>
<dbReference type="CDD" id="cd16802">
    <property type="entry name" value="RING-H2_RNF128-like"/>
    <property type="match status" value="1"/>
</dbReference>
<dbReference type="FunFam" id="3.50.30.30:FF:000003">
    <property type="entry name" value="E3 ubiquitin-protein ligase RNF128"/>
    <property type="match status" value="1"/>
</dbReference>
<dbReference type="FunFam" id="3.30.40.10:FF:000009">
    <property type="entry name" value="E3 ubiquitin-protein ligase RNF130"/>
    <property type="match status" value="1"/>
</dbReference>
<dbReference type="Gene3D" id="3.50.30.30">
    <property type="match status" value="1"/>
</dbReference>
<dbReference type="Gene3D" id="3.30.40.10">
    <property type="entry name" value="Zinc/RING finger domain, C3HC4 (zinc finger)"/>
    <property type="match status" value="1"/>
</dbReference>
<dbReference type="InterPro" id="IPR046450">
    <property type="entry name" value="PA_dom_sf"/>
</dbReference>
<dbReference type="InterPro" id="IPR003137">
    <property type="entry name" value="PA_domain"/>
</dbReference>
<dbReference type="InterPro" id="IPR001841">
    <property type="entry name" value="Znf_RING"/>
</dbReference>
<dbReference type="InterPro" id="IPR013083">
    <property type="entry name" value="Znf_RING/FYVE/PHD"/>
</dbReference>
<dbReference type="PANTHER" id="PTHR46539">
    <property type="entry name" value="E3 UBIQUITIN-PROTEIN LIGASE ATL42"/>
    <property type="match status" value="1"/>
</dbReference>
<dbReference type="PANTHER" id="PTHR46539:SF27">
    <property type="entry name" value="RING FINGER PROTEIN 128"/>
    <property type="match status" value="1"/>
</dbReference>
<dbReference type="Pfam" id="PF02225">
    <property type="entry name" value="PA"/>
    <property type="match status" value="1"/>
</dbReference>
<dbReference type="Pfam" id="PF13639">
    <property type="entry name" value="zf-RING_2"/>
    <property type="match status" value="1"/>
</dbReference>
<dbReference type="SMART" id="SM00184">
    <property type="entry name" value="RING"/>
    <property type="match status" value="1"/>
</dbReference>
<dbReference type="SUPFAM" id="SSF52025">
    <property type="entry name" value="PA domain"/>
    <property type="match status" value="1"/>
</dbReference>
<dbReference type="SUPFAM" id="SSF57850">
    <property type="entry name" value="RING/U-box"/>
    <property type="match status" value="1"/>
</dbReference>
<dbReference type="PROSITE" id="PS50089">
    <property type="entry name" value="ZF_RING_2"/>
    <property type="match status" value="1"/>
</dbReference>
<accession>Q8WVZ7</accession>
<accession>A4D0W2</accession>
<accession>Q8N7G7</accession>
<sequence>MHLLKVGTWRNNTASSWLMKFSVLWLVSQNCCRASVVWMAYMNISFHVGNHVLSELGETGVFGRSSTLKRVAGVIVPPEGKIQNACNPNTIFSRSKYSETWLALIERGGCTFTQKIKVATEKGASGVIIYNVPGTGNQVFPMFHQAFEDVVVVMIGNLKGTEIFHLIKKGVLITAVVEVGRKHIIWMNHYLVSFVIVTTATLAYFIFYHIHRLCLARIQNRRWQRLTTDLQNTFGQLQLRVVKEGDEEINPNGDSCVICFERYKPNDIVRILTCKHFFHKNCIDPWILPHGTCPICKCDILKVLGIQVVVENGTEPLQVLMSNELPETLSPSEEETNNEVSPAGTSDKVIHVEENPTSQNNDIQPHSVVEDVHPSP</sequence>
<reference key="1">
    <citation type="submission" date="2001-10" db="EMBL/GenBank/DDBJ databases">
        <authorList>
            <person name="Guo J.H."/>
            <person name="Yu L."/>
        </authorList>
    </citation>
    <scope>NUCLEOTIDE SEQUENCE [LARGE SCALE MRNA]</scope>
    <source>
        <tissue>Testis</tissue>
    </source>
</reference>
<reference key="2">
    <citation type="journal article" date="2004" name="Nat. Genet.">
        <title>Complete sequencing and characterization of 21,243 full-length human cDNAs.</title>
        <authorList>
            <person name="Ota T."/>
            <person name="Suzuki Y."/>
            <person name="Nishikawa T."/>
            <person name="Otsuki T."/>
            <person name="Sugiyama T."/>
            <person name="Irie R."/>
            <person name="Wakamatsu A."/>
            <person name="Hayashi K."/>
            <person name="Sato H."/>
            <person name="Nagai K."/>
            <person name="Kimura K."/>
            <person name="Makita H."/>
            <person name="Sekine M."/>
            <person name="Obayashi M."/>
            <person name="Nishi T."/>
            <person name="Shibahara T."/>
            <person name="Tanaka T."/>
            <person name="Ishii S."/>
            <person name="Yamamoto J."/>
            <person name="Saito K."/>
            <person name="Kawai Y."/>
            <person name="Isono Y."/>
            <person name="Nakamura Y."/>
            <person name="Nagahari K."/>
            <person name="Murakami K."/>
            <person name="Yasuda T."/>
            <person name="Iwayanagi T."/>
            <person name="Wagatsuma M."/>
            <person name="Shiratori A."/>
            <person name="Sudo H."/>
            <person name="Hosoiri T."/>
            <person name="Kaku Y."/>
            <person name="Kodaira H."/>
            <person name="Kondo H."/>
            <person name="Sugawara M."/>
            <person name="Takahashi M."/>
            <person name="Kanda K."/>
            <person name="Yokoi T."/>
            <person name="Furuya T."/>
            <person name="Kikkawa E."/>
            <person name="Omura Y."/>
            <person name="Abe K."/>
            <person name="Kamihara K."/>
            <person name="Katsuta N."/>
            <person name="Sato K."/>
            <person name="Tanikawa M."/>
            <person name="Yamazaki M."/>
            <person name="Ninomiya K."/>
            <person name="Ishibashi T."/>
            <person name="Yamashita H."/>
            <person name="Murakawa K."/>
            <person name="Fujimori K."/>
            <person name="Tanai H."/>
            <person name="Kimata M."/>
            <person name="Watanabe M."/>
            <person name="Hiraoka S."/>
            <person name="Chiba Y."/>
            <person name="Ishida S."/>
            <person name="Ono Y."/>
            <person name="Takiguchi S."/>
            <person name="Watanabe S."/>
            <person name="Yosida M."/>
            <person name="Hotuta T."/>
            <person name="Kusano J."/>
            <person name="Kanehori K."/>
            <person name="Takahashi-Fujii A."/>
            <person name="Hara H."/>
            <person name="Tanase T.-O."/>
            <person name="Nomura Y."/>
            <person name="Togiya S."/>
            <person name="Komai F."/>
            <person name="Hara R."/>
            <person name="Takeuchi K."/>
            <person name="Arita M."/>
            <person name="Imose N."/>
            <person name="Musashino K."/>
            <person name="Yuuki H."/>
            <person name="Oshima A."/>
            <person name="Sasaki N."/>
            <person name="Aotsuka S."/>
            <person name="Yoshikawa Y."/>
            <person name="Matsunawa H."/>
            <person name="Ichihara T."/>
            <person name="Shiohata N."/>
            <person name="Sano S."/>
            <person name="Moriya S."/>
            <person name="Momiyama H."/>
            <person name="Satoh N."/>
            <person name="Takami S."/>
            <person name="Terashima Y."/>
            <person name="Suzuki O."/>
            <person name="Nakagawa S."/>
            <person name="Senoh A."/>
            <person name="Mizoguchi H."/>
            <person name="Goto Y."/>
            <person name="Shimizu F."/>
            <person name="Wakebe H."/>
            <person name="Hishigaki H."/>
            <person name="Watanabe T."/>
            <person name="Sugiyama A."/>
            <person name="Takemoto M."/>
            <person name="Kawakami B."/>
            <person name="Yamazaki M."/>
            <person name="Watanabe K."/>
            <person name="Kumagai A."/>
            <person name="Itakura S."/>
            <person name="Fukuzumi Y."/>
            <person name="Fujimori Y."/>
            <person name="Komiyama M."/>
            <person name="Tashiro H."/>
            <person name="Tanigami A."/>
            <person name="Fujiwara T."/>
            <person name="Ono T."/>
            <person name="Yamada K."/>
            <person name="Fujii Y."/>
            <person name="Ozaki K."/>
            <person name="Hirao M."/>
            <person name="Ohmori Y."/>
            <person name="Kawabata A."/>
            <person name="Hikiji T."/>
            <person name="Kobatake N."/>
            <person name="Inagaki H."/>
            <person name="Ikema Y."/>
            <person name="Okamoto S."/>
            <person name="Okitani R."/>
            <person name="Kawakami T."/>
            <person name="Noguchi S."/>
            <person name="Itoh T."/>
            <person name="Shigeta K."/>
            <person name="Senba T."/>
            <person name="Matsumura K."/>
            <person name="Nakajima Y."/>
            <person name="Mizuno T."/>
            <person name="Morinaga M."/>
            <person name="Sasaki M."/>
            <person name="Togashi T."/>
            <person name="Oyama M."/>
            <person name="Hata H."/>
            <person name="Watanabe M."/>
            <person name="Komatsu T."/>
            <person name="Mizushima-Sugano J."/>
            <person name="Satoh T."/>
            <person name="Shirai Y."/>
            <person name="Takahashi Y."/>
            <person name="Nakagawa K."/>
            <person name="Okumura K."/>
            <person name="Nagase T."/>
            <person name="Nomura N."/>
            <person name="Kikuchi H."/>
            <person name="Masuho Y."/>
            <person name="Yamashita R."/>
            <person name="Nakai K."/>
            <person name="Yada T."/>
            <person name="Nakamura Y."/>
            <person name="Ohara O."/>
            <person name="Isogai T."/>
            <person name="Sugano S."/>
        </authorList>
    </citation>
    <scope>NUCLEOTIDE SEQUENCE [LARGE SCALE MRNA]</scope>
    <source>
        <tissue>Testis</tissue>
    </source>
</reference>
<reference key="3">
    <citation type="journal article" date="2003" name="Nature">
        <title>The DNA sequence of human chromosome 7.</title>
        <authorList>
            <person name="Hillier L.W."/>
            <person name="Fulton R.S."/>
            <person name="Fulton L.A."/>
            <person name="Graves T.A."/>
            <person name="Pepin K.H."/>
            <person name="Wagner-McPherson C."/>
            <person name="Layman D."/>
            <person name="Maas J."/>
            <person name="Jaeger S."/>
            <person name="Walker R."/>
            <person name="Wylie K."/>
            <person name="Sekhon M."/>
            <person name="Becker M.C."/>
            <person name="O'Laughlin M.D."/>
            <person name="Schaller M.E."/>
            <person name="Fewell G.A."/>
            <person name="Delehaunty K.D."/>
            <person name="Miner T.L."/>
            <person name="Nash W.E."/>
            <person name="Cordes M."/>
            <person name="Du H."/>
            <person name="Sun H."/>
            <person name="Edwards J."/>
            <person name="Bradshaw-Cordum H."/>
            <person name="Ali J."/>
            <person name="Andrews S."/>
            <person name="Isak A."/>
            <person name="Vanbrunt A."/>
            <person name="Nguyen C."/>
            <person name="Du F."/>
            <person name="Lamar B."/>
            <person name="Courtney L."/>
            <person name="Kalicki J."/>
            <person name="Ozersky P."/>
            <person name="Bielicki L."/>
            <person name="Scott K."/>
            <person name="Holmes A."/>
            <person name="Harkins R."/>
            <person name="Harris A."/>
            <person name="Strong C.M."/>
            <person name="Hou S."/>
            <person name="Tomlinson C."/>
            <person name="Dauphin-Kohlberg S."/>
            <person name="Kozlowicz-Reilly A."/>
            <person name="Leonard S."/>
            <person name="Rohlfing T."/>
            <person name="Rock S.M."/>
            <person name="Tin-Wollam A.-M."/>
            <person name="Abbott A."/>
            <person name="Minx P."/>
            <person name="Maupin R."/>
            <person name="Strowmatt C."/>
            <person name="Latreille P."/>
            <person name="Miller N."/>
            <person name="Johnson D."/>
            <person name="Murray J."/>
            <person name="Woessner J.P."/>
            <person name="Wendl M.C."/>
            <person name="Yang S.-P."/>
            <person name="Schultz B.R."/>
            <person name="Wallis J.W."/>
            <person name="Spieth J."/>
            <person name="Bieri T.A."/>
            <person name="Nelson J.O."/>
            <person name="Berkowicz N."/>
            <person name="Wohldmann P.E."/>
            <person name="Cook L.L."/>
            <person name="Hickenbotham M.T."/>
            <person name="Eldred J."/>
            <person name="Williams D."/>
            <person name="Bedell J.A."/>
            <person name="Mardis E.R."/>
            <person name="Clifton S.W."/>
            <person name="Chissoe S.L."/>
            <person name="Marra M.A."/>
            <person name="Raymond C."/>
            <person name="Haugen E."/>
            <person name="Gillett W."/>
            <person name="Zhou Y."/>
            <person name="James R."/>
            <person name="Phelps K."/>
            <person name="Iadanoto S."/>
            <person name="Bubb K."/>
            <person name="Simms E."/>
            <person name="Levy R."/>
            <person name="Clendenning J."/>
            <person name="Kaul R."/>
            <person name="Kent W.J."/>
            <person name="Furey T.S."/>
            <person name="Baertsch R.A."/>
            <person name="Brent M.R."/>
            <person name="Keibler E."/>
            <person name="Flicek P."/>
            <person name="Bork P."/>
            <person name="Suyama M."/>
            <person name="Bailey J.A."/>
            <person name="Portnoy M.E."/>
            <person name="Torrents D."/>
            <person name="Chinwalla A.T."/>
            <person name="Gish W.R."/>
            <person name="Eddy S.R."/>
            <person name="McPherson J.D."/>
            <person name="Olson M.V."/>
            <person name="Eichler E.E."/>
            <person name="Green E.D."/>
            <person name="Waterston R.H."/>
            <person name="Wilson R.K."/>
        </authorList>
    </citation>
    <scope>NUCLEOTIDE SEQUENCE [LARGE SCALE GENOMIC DNA]</scope>
</reference>
<reference key="4">
    <citation type="submission" date="2005-07" db="EMBL/GenBank/DDBJ databases">
        <authorList>
            <person name="Mural R.J."/>
            <person name="Istrail S."/>
            <person name="Sutton G.G."/>
            <person name="Florea L."/>
            <person name="Halpern A.L."/>
            <person name="Mobarry C.M."/>
            <person name="Lippert R."/>
            <person name="Walenz B."/>
            <person name="Shatkay H."/>
            <person name="Dew I."/>
            <person name="Miller J.R."/>
            <person name="Flanigan M.J."/>
            <person name="Edwards N.J."/>
            <person name="Bolanos R."/>
            <person name="Fasulo D."/>
            <person name="Halldorsson B.V."/>
            <person name="Hannenhalli S."/>
            <person name="Turner R."/>
            <person name="Yooseph S."/>
            <person name="Lu F."/>
            <person name="Nusskern D.R."/>
            <person name="Shue B.C."/>
            <person name="Zheng X.H."/>
            <person name="Zhong F."/>
            <person name="Delcher A.L."/>
            <person name="Huson D.H."/>
            <person name="Kravitz S.A."/>
            <person name="Mouchard L."/>
            <person name="Reinert K."/>
            <person name="Remington K.A."/>
            <person name="Clark A.G."/>
            <person name="Waterman M.S."/>
            <person name="Eichler E.E."/>
            <person name="Adams M.D."/>
            <person name="Hunkapiller M.W."/>
            <person name="Myers E.W."/>
            <person name="Venter J.C."/>
        </authorList>
    </citation>
    <scope>NUCLEOTIDE SEQUENCE [LARGE SCALE GENOMIC DNA]</scope>
</reference>
<reference key="5">
    <citation type="journal article" date="2004" name="Genome Res.">
        <title>The status, quality, and expansion of the NIH full-length cDNA project: the Mammalian Gene Collection (MGC).</title>
        <authorList>
            <consortium name="The MGC Project Team"/>
        </authorList>
    </citation>
    <scope>NUCLEOTIDE SEQUENCE [LARGE SCALE MRNA]</scope>
    <source>
        <tissue>Testis</tissue>
    </source>
</reference>
<reference key="6">
    <citation type="journal article" date="2022" name="BMC Biol.">
        <title>The testis-specific E3 ubiquitin ligase RNF133 is required for fecundity in mice.</title>
        <authorList>
            <person name="Nozawa K."/>
            <person name="Fujihara Y."/>
            <person name="Devlin D.J."/>
            <person name="Deras R.E."/>
            <person name="Kent K."/>
            <person name="Larina I.V."/>
            <person name="Umezu K."/>
            <person name="Yu Z."/>
            <person name="Sutton C.M."/>
            <person name="Ye Q."/>
            <person name="Dean L.K."/>
            <person name="Emori C."/>
            <person name="Ikawa M."/>
            <person name="Garcia T.X."/>
            <person name="Matzuk M.M."/>
        </authorList>
    </citation>
    <scope>TISSUE SPECIFICITY</scope>
    <scope>FUNCTION</scope>
    <scope>INTERACTION WITH UBE2J1</scope>
    <scope>SUBCELLULAR LOCATION</scope>
</reference>
<comment type="function">
    <text evidence="1 5">Has E3 ubiquitin-protein ligase activity (By similarity). Plays a role in male fecundity through the interaction with the E2 ubituitin-protein ligase UBE2J1 (PubMed:35831855).</text>
</comment>
<comment type="catalytic activity">
    <reaction evidence="1">
        <text>S-ubiquitinyl-[E2 ubiquitin-conjugating enzyme]-L-cysteine + [acceptor protein]-L-lysine = [E2 ubiquitin-conjugating enzyme]-L-cysteine + N(6)-ubiquitinyl-[acceptor protein]-L-lysine.</text>
        <dbReference type="EC" id="2.3.2.27"/>
    </reaction>
</comment>
<comment type="pathway">
    <text evidence="1">Protein modification; protein ubiquitination.</text>
</comment>
<comment type="subunit">
    <text evidence="5">Interacts with E3 ligase UBE2J1.</text>
</comment>
<comment type="subcellular location">
    <subcellularLocation>
        <location evidence="5">Endoplasmic reticulum membrane</location>
        <topology evidence="2">Single-pass membrane protein</topology>
    </subcellularLocation>
</comment>
<comment type="tissue specificity">
    <text evidence="5">Expression is testis-specific.</text>
</comment>
<comment type="PTM">
    <text evidence="1">Auto-ubiquitinated.</text>
</comment>
<proteinExistence type="evidence at protein level"/>
<evidence type="ECO:0000250" key="1">
    <source>
        <dbReference type="UniProtKB" id="Q14B02"/>
    </source>
</evidence>
<evidence type="ECO:0000255" key="2"/>
<evidence type="ECO:0000255" key="3">
    <source>
        <dbReference type="PROSITE-ProRule" id="PRU00175"/>
    </source>
</evidence>
<evidence type="ECO:0000256" key="4">
    <source>
        <dbReference type="SAM" id="MobiDB-lite"/>
    </source>
</evidence>
<evidence type="ECO:0000269" key="5">
    <source>
    </source>
</evidence>
<evidence type="ECO:0000305" key="6"/>
<evidence type="ECO:0000312" key="7">
    <source>
        <dbReference type="HGNC" id="HGNC:21154"/>
    </source>
</evidence>
<organism>
    <name type="scientific">Homo sapiens</name>
    <name type="common">Human</name>
    <dbReference type="NCBI Taxonomy" id="9606"/>
    <lineage>
        <taxon>Eukaryota</taxon>
        <taxon>Metazoa</taxon>
        <taxon>Chordata</taxon>
        <taxon>Craniata</taxon>
        <taxon>Vertebrata</taxon>
        <taxon>Euteleostomi</taxon>
        <taxon>Mammalia</taxon>
        <taxon>Eutheria</taxon>
        <taxon>Euarchontoglires</taxon>
        <taxon>Primates</taxon>
        <taxon>Haplorrhini</taxon>
        <taxon>Catarrhini</taxon>
        <taxon>Hominidae</taxon>
        <taxon>Homo</taxon>
    </lineage>
</organism>
<keyword id="KW-0256">Endoplasmic reticulum</keyword>
<keyword id="KW-0472">Membrane</keyword>
<keyword id="KW-0479">Metal-binding</keyword>
<keyword id="KW-1267">Proteomics identification</keyword>
<keyword id="KW-1185">Reference proteome</keyword>
<keyword id="KW-0808">Transferase</keyword>
<keyword id="KW-0812">Transmembrane</keyword>
<keyword id="KW-1133">Transmembrane helix</keyword>
<keyword id="KW-0832">Ubl conjugation</keyword>
<keyword id="KW-0833">Ubl conjugation pathway</keyword>
<keyword id="KW-0862">Zinc</keyword>
<keyword id="KW-0863">Zinc-finger</keyword>
<name>RN133_HUMAN</name>
<protein>
    <recommendedName>
        <fullName>E3 ubiquitin-protein ligase RNF133</fullName>
        <ecNumber evidence="1">2.3.2.27</ecNumber>
    </recommendedName>
    <alternativeName>
        <fullName>RING finger protein 133</fullName>
    </alternativeName>
    <alternativeName>
        <fullName evidence="6">RING-type E3 ubiquitin transferase RNF133</fullName>
    </alternativeName>
</protein>
<feature type="chain" id="PRO_0000247837" description="E3 ubiquitin-protein ligase RNF133">
    <location>
        <begin position="1"/>
        <end position="376"/>
    </location>
</feature>
<feature type="transmembrane region" description="Helical" evidence="2">
    <location>
        <begin position="190"/>
        <end position="210"/>
    </location>
</feature>
<feature type="domain" description="PA">
    <location>
        <begin position="65"/>
        <end position="167"/>
    </location>
</feature>
<feature type="zinc finger region" description="RING-type; atypical" evidence="3">
    <location>
        <begin position="256"/>
        <end position="297"/>
    </location>
</feature>
<feature type="region of interest" description="Disordered" evidence="4">
    <location>
        <begin position="327"/>
        <end position="376"/>
    </location>
</feature>
<feature type="compositionally biased region" description="Polar residues" evidence="4">
    <location>
        <begin position="355"/>
        <end position="364"/>
    </location>
</feature>
<feature type="sequence conflict" description="In Ref. 2; BAC05321." evidence="6" ref="2">
    <original>R</original>
    <variation>G</variation>
    <location>
        <position position="10"/>
    </location>
</feature>
<gene>
    <name evidence="7" type="primary">RNF133</name>
</gene>